<sequence>MERTLAIIKPDAFAAGHAGGILARIYEEGFRVIGMKKLALSEKQAAGFYYVHEGKPFFDDLKGFMSSGPCVVMVLEADGAIRKWRDLMGATNPADAAAGTLRKEFGTSLGRNAVHGSDAPETAAFEVGYFFAGLDLL</sequence>
<gene>
    <name evidence="1" type="primary">ndk</name>
    <name type="ordered locus">Pcar_2023</name>
</gene>
<organism>
    <name type="scientific">Syntrophotalea carbinolica (strain DSM 2380 / NBRC 103641 / GraBd1)</name>
    <name type="common">Pelobacter carbinolicus</name>
    <dbReference type="NCBI Taxonomy" id="338963"/>
    <lineage>
        <taxon>Bacteria</taxon>
        <taxon>Pseudomonadati</taxon>
        <taxon>Thermodesulfobacteriota</taxon>
        <taxon>Desulfuromonadia</taxon>
        <taxon>Desulfuromonadales</taxon>
        <taxon>Syntrophotaleaceae</taxon>
        <taxon>Syntrophotalea</taxon>
    </lineage>
</organism>
<evidence type="ECO:0000255" key="1">
    <source>
        <dbReference type="HAMAP-Rule" id="MF_00451"/>
    </source>
</evidence>
<accession>Q3A2Z3</accession>
<protein>
    <recommendedName>
        <fullName evidence="1">Nucleoside diphosphate kinase</fullName>
        <shortName evidence="1">NDK</shortName>
        <shortName evidence="1">NDP kinase</shortName>
        <ecNumber evidence="1">2.7.4.6</ecNumber>
    </recommendedName>
    <alternativeName>
        <fullName evidence="1">Nucleoside-2-P kinase</fullName>
    </alternativeName>
</protein>
<proteinExistence type="inferred from homology"/>
<reference key="1">
    <citation type="submission" date="2005-10" db="EMBL/GenBank/DDBJ databases">
        <title>Complete sequence of Pelobacter carbinolicus DSM 2380.</title>
        <authorList>
            <person name="Copeland A."/>
            <person name="Lucas S."/>
            <person name="Lapidus A."/>
            <person name="Barry K."/>
            <person name="Detter J.C."/>
            <person name="Glavina T."/>
            <person name="Hammon N."/>
            <person name="Israni S."/>
            <person name="Pitluck S."/>
            <person name="Chertkov O."/>
            <person name="Schmutz J."/>
            <person name="Larimer F."/>
            <person name="Land M."/>
            <person name="Kyrpides N."/>
            <person name="Ivanova N."/>
            <person name="Richardson P."/>
        </authorList>
    </citation>
    <scope>NUCLEOTIDE SEQUENCE [LARGE SCALE GENOMIC DNA]</scope>
    <source>
        <strain>DSM 2380 / NBRC 103641 / GraBd1</strain>
    </source>
</reference>
<dbReference type="EC" id="2.7.4.6" evidence="1"/>
<dbReference type="EMBL" id="CP000142">
    <property type="protein sequence ID" value="ABA89264.1"/>
    <property type="molecule type" value="Genomic_DNA"/>
</dbReference>
<dbReference type="RefSeq" id="WP_011341774.1">
    <property type="nucleotide sequence ID" value="NC_007498.2"/>
</dbReference>
<dbReference type="SMR" id="Q3A2Z3"/>
<dbReference type="STRING" id="338963.Pcar_2023"/>
<dbReference type="KEGG" id="pca:Pcar_2023"/>
<dbReference type="eggNOG" id="COG0105">
    <property type="taxonomic scope" value="Bacteria"/>
</dbReference>
<dbReference type="HOGENOM" id="CLU_060216_8_1_7"/>
<dbReference type="OrthoDB" id="9801161at2"/>
<dbReference type="Proteomes" id="UP000002534">
    <property type="component" value="Chromosome"/>
</dbReference>
<dbReference type="GO" id="GO:0005737">
    <property type="term" value="C:cytoplasm"/>
    <property type="evidence" value="ECO:0007669"/>
    <property type="project" value="UniProtKB-SubCell"/>
</dbReference>
<dbReference type="GO" id="GO:0005524">
    <property type="term" value="F:ATP binding"/>
    <property type="evidence" value="ECO:0007669"/>
    <property type="project" value="UniProtKB-UniRule"/>
</dbReference>
<dbReference type="GO" id="GO:0046872">
    <property type="term" value="F:metal ion binding"/>
    <property type="evidence" value="ECO:0007669"/>
    <property type="project" value="UniProtKB-KW"/>
</dbReference>
<dbReference type="GO" id="GO:0004550">
    <property type="term" value="F:nucleoside diphosphate kinase activity"/>
    <property type="evidence" value="ECO:0007669"/>
    <property type="project" value="UniProtKB-UniRule"/>
</dbReference>
<dbReference type="GO" id="GO:0006241">
    <property type="term" value="P:CTP biosynthetic process"/>
    <property type="evidence" value="ECO:0007669"/>
    <property type="project" value="UniProtKB-UniRule"/>
</dbReference>
<dbReference type="GO" id="GO:0006183">
    <property type="term" value="P:GTP biosynthetic process"/>
    <property type="evidence" value="ECO:0007669"/>
    <property type="project" value="UniProtKB-UniRule"/>
</dbReference>
<dbReference type="GO" id="GO:0006228">
    <property type="term" value="P:UTP biosynthetic process"/>
    <property type="evidence" value="ECO:0007669"/>
    <property type="project" value="UniProtKB-UniRule"/>
</dbReference>
<dbReference type="CDD" id="cd04413">
    <property type="entry name" value="NDPk_I"/>
    <property type="match status" value="1"/>
</dbReference>
<dbReference type="FunFam" id="3.30.70.141:FF:000017">
    <property type="entry name" value="Nucleoside diphosphate kinase"/>
    <property type="match status" value="1"/>
</dbReference>
<dbReference type="Gene3D" id="3.30.70.141">
    <property type="entry name" value="Nucleoside diphosphate kinase-like domain"/>
    <property type="match status" value="1"/>
</dbReference>
<dbReference type="HAMAP" id="MF_00451">
    <property type="entry name" value="NDP_kinase"/>
    <property type="match status" value="1"/>
</dbReference>
<dbReference type="InterPro" id="IPR034907">
    <property type="entry name" value="NDK-like_dom"/>
</dbReference>
<dbReference type="InterPro" id="IPR036850">
    <property type="entry name" value="NDK-like_dom_sf"/>
</dbReference>
<dbReference type="InterPro" id="IPR001564">
    <property type="entry name" value="Nucleoside_diP_kinase"/>
</dbReference>
<dbReference type="InterPro" id="IPR023005">
    <property type="entry name" value="Nucleoside_diP_kinase_AS"/>
</dbReference>
<dbReference type="NCBIfam" id="NF001908">
    <property type="entry name" value="PRK00668.1"/>
    <property type="match status" value="1"/>
</dbReference>
<dbReference type="PANTHER" id="PTHR46161">
    <property type="entry name" value="NUCLEOSIDE DIPHOSPHATE KINASE"/>
    <property type="match status" value="1"/>
</dbReference>
<dbReference type="PANTHER" id="PTHR46161:SF3">
    <property type="entry name" value="NUCLEOSIDE DIPHOSPHATE KINASE DDB_G0292928-RELATED"/>
    <property type="match status" value="1"/>
</dbReference>
<dbReference type="Pfam" id="PF00334">
    <property type="entry name" value="NDK"/>
    <property type="match status" value="1"/>
</dbReference>
<dbReference type="PRINTS" id="PR01243">
    <property type="entry name" value="NUCDPKINASE"/>
</dbReference>
<dbReference type="SMART" id="SM00562">
    <property type="entry name" value="NDK"/>
    <property type="match status" value="1"/>
</dbReference>
<dbReference type="SUPFAM" id="SSF54919">
    <property type="entry name" value="Nucleoside diphosphate kinase, NDK"/>
    <property type="match status" value="1"/>
</dbReference>
<dbReference type="PROSITE" id="PS00469">
    <property type="entry name" value="NDPK"/>
    <property type="match status" value="1"/>
</dbReference>
<dbReference type="PROSITE" id="PS51374">
    <property type="entry name" value="NDPK_LIKE"/>
    <property type="match status" value="1"/>
</dbReference>
<keyword id="KW-0067">ATP-binding</keyword>
<keyword id="KW-0963">Cytoplasm</keyword>
<keyword id="KW-0418">Kinase</keyword>
<keyword id="KW-0460">Magnesium</keyword>
<keyword id="KW-0479">Metal-binding</keyword>
<keyword id="KW-0546">Nucleotide metabolism</keyword>
<keyword id="KW-0547">Nucleotide-binding</keyword>
<keyword id="KW-0597">Phosphoprotein</keyword>
<keyword id="KW-1185">Reference proteome</keyword>
<keyword id="KW-0808">Transferase</keyword>
<name>NDK_SYNC1</name>
<feature type="chain" id="PRO_1000026266" description="Nucleoside diphosphate kinase">
    <location>
        <begin position="1"/>
        <end position="137"/>
    </location>
</feature>
<feature type="active site" description="Pros-phosphohistidine intermediate" evidence="1">
    <location>
        <position position="115"/>
    </location>
</feature>
<feature type="binding site" evidence="1">
    <location>
        <position position="9"/>
    </location>
    <ligand>
        <name>ATP</name>
        <dbReference type="ChEBI" id="CHEBI:30616"/>
    </ligand>
</feature>
<feature type="binding site" evidence="1">
    <location>
        <position position="57"/>
    </location>
    <ligand>
        <name>ATP</name>
        <dbReference type="ChEBI" id="CHEBI:30616"/>
    </ligand>
</feature>
<feature type="binding site" evidence="1">
    <location>
        <position position="85"/>
    </location>
    <ligand>
        <name>ATP</name>
        <dbReference type="ChEBI" id="CHEBI:30616"/>
    </ligand>
</feature>
<feature type="binding site" evidence="1">
    <location>
        <position position="91"/>
    </location>
    <ligand>
        <name>ATP</name>
        <dbReference type="ChEBI" id="CHEBI:30616"/>
    </ligand>
</feature>
<feature type="binding site" evidence="1">
    <location>
        <position position="102"/>
    </location>
    <ligand>
        <name>ATP</name>
        <dbReference type="ChEBI" id="CHEBI:30616"/>
    </ligand>
</feature>
<feature type="binding site" evidence="1">
    <location>
        <position position="112"/>
    </location>
    <ligand>
        <name>ATP</name>
        <dbReference type="ChEBI" id="CHEBI:30616"/>
    </ligand>
</feature>
<comment type="function">
    <text evidence="1">Major role in the synthesis of nucleoside triphosphates other than ATP. The ATP gamma phosphate is transferred to the NDP beta phosphate via a ping-pong mechanism, using a phosphorylated active-site intermediate.</text>
</comment>
<comment type="catalytic activity">
    <reaction evidence="1">
        <text>a 2'-deoxyribonucleoside 5'-diphosphate + ATP = a 2'-deoxyribonucleoside 5'-triphosphate + ADP</text>
        <dbReference type="Rhea" id="RHEA:44640"/>
        <dbReference type="ChEBI" id="CHEBI:30616"/>
        <dbReference type="ChEBI" id="CHEBI:61560"/>
        <dbReference type="ChEBI" id="CHEBI:73316"/>
        <dbReference type="ChEBI" id="CHEBI:456216"/>
        <dbReference type="EC" id="2.7.4.6"/>
    </reaction>
</comment>
<comment type="catalytic activity">
    <reaction evidence="1">
        <text>a ribonucleoside 5'-diphosphate + ATP = a ribonucleoside 5'-triphosphate + ADP</text>
        <dbReference type="Rhea" id="RHEA:18113"/>
        <dbReference type="ChEBI" id="CHEBI:30616"/>
        <dbReference type="ChEBI" id="CHEBI:57930"/>
        <dbReference type="ChEBI" id="CHEBI:61557"/>
        <dbReference type="ChEBI" id="CHEBI:456216"/>
        <dbReference type="EC" id="2.7.4.6"/>
    </reaction>
</comment>
<comment type="cofactor">
    <cofactor evidence="1">
        <name>Mg(2+)</name>
        <dbReference type="ChEBI" id="CHEBI:18420"/>
    </cofactor>
</comment>
<comment type="subunit">
    <text evidence="1">Homotetramer.</text>
</comment>
<comment type="subcellular location">
    <subcellularLocation>
        <location evidence="1">Cytoplasm</location>
    </subcellularLocation>
</comment>
<comment type="similarity">
    <text evidence="1">Belongs to the NDK family.</text>
</comment>